<evidence type="ECO:0000250" key="1"/>
<evidence type="ECO:0000255" key="2"/>
<evidence type="ECO:0000269" key="3">
    <source>
    </source>
</evidence>
<evidence type="ECO:0000305" key="4"/>
<reference key="1">
    <citation type="journal article" date="2005" name="Nature">
        <title>The map-based sequence of the rice genome.</title>
        <authorList>
            <consortium name="International rice genome sequencing project (IRGSP)"/>
        </authorList>
    </citation>
    <scope>NUCLEOTIDE SEQUENCE [LARGE SCALE GENOMIC DNA]</scope>
    <source>
        <strain>cv. Nipponbare</strain>
    </source>
</reference>
<reference key="2">
    <citation type="journal article" date="2013" name="Rice">
        <title>Improvement of the Oryza sativa Nipponbare reference genome using next generation sequence and optical map data.</title>
        <authorList>
            <person name="Kawahara Y."/>
            <person name="de la Bastide M."/>
            <person name="Hamilton J.P."/>
            <person name="Kanamori H."/>
            <person name="McCombie W.R."/>
            <person name="Ouyang S."/>
            <person name="Schwartz D.C."/>
            <person name="Tanaka T."/>
            <person name="Wu J."/>
            <person name="Zhou S."/>
            <person name="Childs K.L."/>
            <person name="Davidson R.M."/>
            <person name="Lin H."/>
            <person name="Quesada-Ocampo L."/>
            <person name="Vaillancourt B."/>
            <person name="Sakai H."/>
            <person name="Lee S.S."/>
            <person name="Kim J."/>
            <person name="Numa H."/>
            <person name="Itoh T."/>
            <person name="Buell C.R."/>
            <person name="Matsumoto T."/>
        </authorList>
    </citation>
    <scope>GENOME REANNOTATION</scope>
    <source>
        <strain>cv. Nipponbare</strain>
    </source>
</reference>
<reference key="3">
    <citation type="journal article" date="2005" name="PLoS Biol.">
        <title>The genomes of Oryza sativa: a history of duplications.</title>
        <authorList>
            <person name="Yu J."/>
            <person name="Wang J."/>
            <person name="Lin W."/>
            <person name="Li S."/>
            <person name="Li H."/>
            <person name="Zhou J."/>
            <person name="Ni P."/>
            <person name="Dong W."/>
            <person name="Hu S."/>
            <person name="Zeng C."/>
            <person name="Zhang J."/>
            <person name="Zhang Y."/>
            <person name="Li R."/>
            <person name="Xu Z."/>
            <person name="Li S."/>
            <person name="Li X."/>
            <person name="Zheng H."/>
            <person name="Cong L."/>
            <person name="Lin L."/>
            <person name="Yin J."/>
            <person name="Geng J."/>
            <person name="Li G."/>
            <person name="Shi J."/>
            <person name="Liu J."/>
            <person name="Lv H."/>
            <person name="Li J."/>
            <person name="Wang J."/>
            <person name="Deng Y."/>
            <person name="Ran L."/>
            <person name="Shi X."/>
            <person name="Wang X."/>
            <person name="Wu Q."/>
            <person name="Li C."/>
            <person name="Ren X."/>
            <person name="Wang J."/>
            <person name="Wang X."/>
            <person name="Li D."/>
            <person name="Liu D."/>
            <person name="Zhang X."/>
            <person name="Ji Z."/>
            <person name="Zhao W."/>
            <person name="Sun Y."/>
            <person name="Zhang Z."/>
            <person name="Bao J."/>
            <person name="Han Y."/>
            <person name="Dong L."/>
            <person name="Ji J."/>
            <person name="Chen P."/>
            <person name="Wu S."/>
            <person name="Liu J."/>
            <person name="Xiao Y."/>
            <person name="Bu D."/>
            <person name="Tan J."/>
            <person name="Yang L."/>
            <person name="Ye C."/>
            <person name="Zhang J."/>
            <person name="Xu J."/>
            <person name="Zhou Y."/>
            <person name="Yu Y."/>
            <person name="Zhang B."/>
            <person name="Zhuang S."/>
            <person name="Wei H."/>
            <person name="Liu B."/>
            <person name="Lei M."/>
            <person name="Yu H."/>
            <person name="Li Y."/>
            <person name="Xu H."/>
            <person name="Wei S."/>
            <person name="He X."/>
            <person name="Fang L."/>
            <person name="Zhang Z."/>
            <person name="Zhang Y."/>
            <person name="Huang X."/>
            <person name="Su Z."/>
            <person name="Tong W."/>
            <person name="Li J."/>
            <person name="Tong Z."/>
            <person name="Li S."/>
            <person name="Ye J."/>
            <person name="Wang L."/>
            <person name="Fang L."/>
            <person name="Lei T."/>
            <person name="Chen C.-S."/>
            <person name="Chen H.-C."/>
            <person name="Xu Z."/>
            <person name="Li H."/>
            <person name="Huang H."/>
            <person name="Zhang F."/>
            <person name="Xu H."/>
            <person name="Li N."/>
            <person name="Zhao C."/>
            <person name="Li S."/>
            <person name="Dong L."/>
            <person name="Huang Y."/>
            <person name="Li L."/>
            <person name="Xi Y."/>
            <person name="Qi Q."/>
            <person name="Li W."/>
            <person name="Zhang B."/>
            <person name="Hu W."/>
            <person name="Zhang Y."/>
            <person name="Tian X."/>
            <person name="Jiao Y."/>
            <person name="Liang X."/>
            <person name="Jin J."/>
            <person name="Gao L."/>
            <person name="Zheng W."/>
            <person name="Hao B."/>
            <person name="Liu S.-M."/>
            <person name="Wang W."/>
            <person name="Yuan L."/>
            <person name="Cao M."/>
            <person name="McDermott J."/>
            <person name="Samudrala R."/>
            <person name="Wang J."/>
            <person name="Wong G.K.-S."/>
            <person name="Yang H."/>
        </authorList>
    </citation>
    <scope>NUCLEOTIDE SEQUENCE [LARGE SCALE GENOMIC DNA]</scope>
    <source>
        <strain>cv. Nipponbare</strain>
    </source>
</reference>
<reference key="4">
    <citation type="journal article" date="2005" name="Plant Cell Physiol.">
        <title>Identification of 33 rice aquaporin genes and analysis of their expression and function.</title>
        <authorList>
            <person name="Sakurai J."/>
            <person name="Ishikawa F."/>
            <person name="Yamaguchi T."/>
            <person name="Uemura M."/>
            <person name="Maeshima M."/>
        </authorList>
    </citation>
    <scope>NOMENCLATURE</scope>
    <scope>TISSUE SPECIFICITY</scope>
</reference>
<comment type="function">
    <text evidence="1">Aquaporins facilitate the transport of water and small neutral solutes across cell membranes.</text>
</comment>
<comment type="subcellular location">
    <subcellularLocation>
        <location evidence="4">Membrane</location>
        <topology evidence="4">Multi-pass membrane protein</topology>
    </subcellularLocation>
</comment>
<comment type="tissue specificity">
    <text evidence="3">Expressed in leaves and at lower levels in roots and anthers.</text>
</comment>
<comment type="domain">
    <text>Aquaporins contain two tandem repeats each containing three membrane-spanning domains and a pore-forming loop with the signature motif Asn-Pro-Ala (NPA).</text>
</comment>
<comment type="similarity">
    <text evidence="4">Belongs to the MIP/aquaporin (TC 1.A.8) family. NIP (TC 1.A.8.12) subfamily.</text>
</comment>
<feature type="chain" id="PRO_0000286037" description="Aquaporin NIP3-3">
    <location>
        <begin position="1"/>
        <end position="278"/>
    </location>
</feature>
<feature type="transmembrane region" description="Helical; Name=1" evidence="2">
    <location>
        <begin position="70"/>
        <end position="90"/>
    </location>
</feature>
<feature type="transmembrane region" description="Helical; Name=2" evidence="2">
    <location>
        <begin position="99"/>
        <end position="119"/>
    </location>
</feature>
<feature type="transmembrane region" description="Helical; Name=3" evidence="2">
    <location>
        <begin position="141"/>
        <end position="163"/>
    </location>
</feature>
<feature type="transmembrane region" description="Helical; Name=4" evidence="2">
    <location>
        <begin position="185"/>
        <end position="205"/>
    </location>
</feature>
<feature type="transmembrane region" description="Helical; Name=5" evidence="2">
    <location>
        <begin position="213"/>
        <end position="233"/>
    </location>
</feature>
<feature type="transmembrane region" description="Helical; Name=6" evidence="2">
    <location>
        <begin position="255"/>
        <end position="275"/>
    </location>
</feature>
<feature type="short sequence motif" description="NPA 1">
    <location>
        <begin position="127"/>
        <end position="129"/>
    </location>
</feature>
<feature type="short sequence motif" description="NPA 2">
    <location>
        <begin position="238"/>
        <end position="240"/>
    </location>
</feature>
<gene>
    <name type="primary">NIP3-3</name>
    <name type="ordered locus">Os08g0152100</name>
    <name type="ordered locus">LOC_Os08g05600</name>
    <name type="ORF">OJ1349_D05.110</name>
    <name type="ORF">OsJ_025008</name>
</gene>
<proteinExistence type="evidence at transcript level"/>
<accession>Q84S07</accession>
<name>NIP33_ORYSJ</name>
<organism>
    <name type="scientific">Oryza sativa subsp. japonica</name>
    <name type="common">Rice</name>
    <dbReference type="NCBI Taxonomy" id="39947"/>
    <lineage>
        <taxon>Eukaryota</taxon>
        <taxon>Viridiplantae</taxon>
        <taxon>Streptophyta</taxon>
        <taxon>Embryophyta</taxon>
        <taxon>Tracheophyta</taxon>
        <taxon>Spermatophyta</taxon>
        <taxon>Magnoliopsida</taxon>
        <taxon>Liliopsida</taxon>
        <taxon>Poales</taxon>
        <taxon>Poaceae</taxon>
        <taxon>BOP clade</taxon>
        <taxon>Oryzoideae</taxon>
        <taxon>Oryzeae</taxon>
        <taxon>Oryzinae</taxon>
        <taxon>Oryza</taxon>
        <taxon>Oryza sativa</taxon>
    </lineage>
</organism>
<protein>
    <recommendedName>
        <fullName>Aquaporin NIP3-3</fullName>
    </recommendedName>
    <alternativeName>
        <fullName>NOD26-like intrinsic protein 3-3</fullName>
    </alternativeName>
    <alternativeName>
        <fullName>OsNIP3;3</fullName>
    </alternativeName>
</protein>
<keyword id="KW-0472">Membrane</keyword>
<keyword id="KW-1185">Reference proteome</keyword>
<keyword id="KW-0677">Repeat</keyword>
<keyword id="KW-0812">Transmembrane</keyword>
<keyword id="KW-1133">Transmembrane helix</keyword>
<keyword id="KW-0813">Transport</keyword>
<dbReference type="EMBL" id="AP005467">
    <property type="protein sequence ID" value="BAC65382.1"/>
    <property type="molecule type" value="Genomic_DNA"/>
</dbReference>
<dbReference type="EMBL" id="AP014964">
    <property type="status" value="NOT_ANNOTATED_CDS"/>
    <property type="molecule type" value="Genomic_DNA"/>
</dbReference>
<dbReference type="EMBL" id="CM000145">
    <property type="protein sequence ID" value="EAZ41525.1"/>
    <property type="molecule type" value="Genomic_DNA"/>
</dbReference>
<dbReference type="RefSeq" id="XP_015649596.1">
    <property type="nucleotide sequence ID" value="XM_015794110.1"/>
</dbReference>
<dbReference type="SMR" id="Q84S07"/>
<dbReference type="FunCoup" id="Q84S07">
    <property type="interactions" value="12"/>
</dbReference>
<dbReference type="STRING" id="39947.Q84S07"/>
<dbReference type="PaxDb" id="39947-Q84S07"/>
<dbReference type="EnsemblPlants" id="Os08t0152100-01">
    <property type="protein sequence ID" value="Os08t0152100-01"/>
    <property type="gene ID" value="Os08g0152100"/>
</dbReference>
<dbReference type="Gramene" id="Os08t0152100-01">
    <property type="protein sequence ID" value="Os08t0152100-01"/>
    <property type="gene ID" value="Os08g0152100"/>
</dbReference>
<dbReference type="eggNOG" id="KOG0223">
    <property type="taxonomic scope" value="Eukaryota"/>
</dbReference>
<dbReference type="HOGENOM" id="CLU_020019_3_1_1"/>
<dbReference type="InParanoid" id="Q84S07"/>
<dbReference type="OrthoDB" id="3222at2759"/>
<dbReference type="PlantReactome" id="R-OSA-9618218">
    <property type="pathway name" value="Arsenic uptake and detoxification"/>
</dbReference>
<dbReference type="Proteomes" id="UP000000763">
    <property type="component" value="Chromosome 8"/>
</dbReference>
<dbReference type="Proteomes" id="UP000007752">
    <property type="component" value="Chromosome 8"/>
</dbReference>
<dbReference type="Proteomes" id="UP000059680">
    <property type="component" value="Chromosome 8"/>
</dbReference>
<dbReference type="GO" id="GO:0016020">
    <property type="term" value="C:membrane"/>
    <property type="evidence" value="ECO:0007669"/>
    <property type="project" value="UniProtKB-SubCell"/>
</dbReference>
<dbReference type="GO" id="GO:0015267">
    <property type="term" value="F:channel activity"/>
    <property type="evidence" value="ECO:0007669"/>
    <property type="project" value="InterPro"/>
</dbReference>
<dbReference type="Gene3D" id="1.20.1080.10">
    <property type="entry name" value="Glycerol uptake facilitator protein"/>
    <property type="match status" value="1"/>
</dbReference>
<dbReference type="InterPro" id="IPR023271">
    <property type="entry name" value="Aquaporin-like"/>
</dbReference>
<dbReference type="InterPro" id="IPR034294">
    <property type="entry name" value="Aquaporin_transptr"/>
</dbReference>
<dbReference type="InterPro" id="IPR000425">
    <property type="entry name" value="MIP"/>
</dbReference>
<dbReference type="InterPro" id="IPR022357">
    <property type="entry name" value="MIP_CS"/>
</dbReference>
<dbReference type="PANTHER" id="PTHR45724">
    <property type="entry name" value="AQUAPORIN NIP2-1"/>
    <property type="match status" value="1"/>
</dbReference>
<dbReference type="PANTHER" id="PTHR45724:SF55">
    <property type="entry name" value="AQUAPORIN NIP3-2"/>
    <property type="match status" value="1"/>
</dbReference>
<dbReference type="Pfam" id="PF00230">
    <property type="entry name" value="MIP"/>
    <property type="match status" value="1"/>
</dbReference>
<dbReference type="PRINTS" id="PR00783">
    <property type="entry name" value="MINTRINSICP"/>
</dbReference>
<dbReference type="SUPFAM" id="SSF81338">
    <property type="entry name" value="Aquaporin-like"/>
    <property type="match status" value="1"/>
</dbReference>
<dbReference type="PROSITE" id="PS00221">
    <property type="entry name" value="MIP"/>
    <property type="match status" value="1"/>
</dbReference>
<sequence>MEGHKSGMEAVAVAIPPLHTGESNHRIDSNVSSQCHADPAELSDETQQQSLWHLGLRKIIPSSVPLLKKVSAEFFGTFILIFTVLSTIIMDEQHKSIETLLGIATSAGLAVTVLVLSLIHISGCHLNPAISIAMAVFGHLPSAHLLPYISSQILGAVAASFAVKGLYHPVNPGIVTVPNVGTVEAFFVEFIITFFLLFIITALATDPNAVKELIAVAVGATVMMNILVAGPSTGASMNPARTIGAAIATGRYTQIWVYLVATPLGAIAGTGAYVAIKL</sequence>